<protein>
    <recommendedName>
        <fullName>Putative protein p16</fullName>
    </recommendedName>
</protein>
<organismHost>
    <name type="scientific">Escherichia coli</name>
    <dbReference type="NCBI Taxonomy" id="562"/>
</organismHost>
<gene>
    <name type="primary">16</name>
</gene>
<feature type="chain" id="PRO_0000077859" description="Putative protein p16">
    <location>
        <begin position="1"/>
        <end position="109"/>
    </location>
</feature>
<keyword id="KW-1185">Reference proteome</keyword>
<proteinExistence type="predicted"/>
<reference key="1">
    <citation type="journal article" date="1999" name="Virology">
        <title>Isolation and characterization of APSE-1, a bacteriophage infecting the secondary endosymbiont of acyrthosiphon pisum.</title>
        <authorList>
            <person name="van der Wilk F."/>
            <person name="Dullemans A.M."/>
            <person name="Verbeek M."/>
            <person name="van den Heuvel J.F.J.M."/>
        </authorList>
    </citation>
    <scope>NUCLEOTIDE SEQUENCE [LARGE SCALE GENOMIC DNA]</scope>
</reference>
<name>VP16_BPAPS</name>
<accession>Q9T1T2</accession>
<dbReference type="EMBL" id="AF157835">
    <property type="protein sequence ID" value="AAF03959.1"/>
    <property type="molecule type" value="Genomic_DNA"/>
</dbReference>
<dbReference type="RefSeq" id="NP_050977.1">
    <property type="nucleotide sequence ID" value="NC_000935.1"/>
</dbReference>
<dbReference type="SMR" id="Q9T1T2"/>
<dbReference type="KEGG" id="vg:1262310"/>
<dbReference type="Proteomes" id="UP000000853">
    <property type="component" value="Genome"/>
</dbReference>
<dbReference type="Pfam" id="PF23793">
    <property type="entry name" value="LysC"/>
    <property type="match status" value="1"/>
</dbReference>
<sequence length="109" mass="12405">MHTNRPYRHPSLKRLRYRKRLPPNAALICLCLLPLLTGCVRTPIKYLPVPPAPIPATLLDDCAPPVISEHMTWGDSLVLNEQLLLALEMCNQDKAAIRRIEEQKNDSQK</sequence>
<organism>
    <name type="scientific">Acyrthosiphon pisum secondary endosymbiont phage 1</name>
    <name type="common">Bacteriophage APSE-1</name>
    <dbReference type="NCBI Taxonomy" id="2682836"/>
    <lineage>
        <taxon>Viruses</taxon>
        <taxon>Duplodnaviria</taxon>
        <taxon>Heunggongvirae</taxon>
        <taxon>Uroviricota</taxon>
        <taxon>Caudoviricetes</taxon>
        <taxon>Sendosyvirus</taxon>
        <taxon>Sendosyvirus APSE1</taxon>
    </lineage>
</organism>